<accession>B6JH85</accession>
<accession>F8BW45</accession>
<keyword id="KW-0012">Acyltransferase</keyword>
<keyword id="KW-0963">Cytoplasm</keyword>
<keyword id="KW-1185">Reference proteome</keyword>
<keyword id="KW-0808">Transferase</keyword>
<name>LFTR_AFIC5</name>
<proteinExistence type="inferred from homology"/>
<evidence type="ECO:0000255" key="1">
    <source>
        <dbReference type="HAMAP-Rule" id="MF_00688"/>
    </source>
</evidence>
<feature type="chain" id="PRO_1000131933" description="Leucyl/phenylalanyl-tRNA--protein transferase">
    <location>
        <begin position="1"/>
        <end position="227"/>
    </location>
</feature>
<dbReference type="EC" id="2.3.2.6" evidence="1"/>
<dbReference type="EMBL" id="CP001196">
    <property type="protein sequence ID" value="ACI93094.1"/>
    <property type="molecule type" value="Genomic_DNA"/>
</dbReference>
<dbReference type="EMBL" id="CP002826">
    <property type="protein sequence ID" value="AEI06756.1"/>
    <property type="molecule type" value="Genomic_DNA"/>
</dbReference>
<dbReference type="RefSeq" id="WP_012563122.1">
    <property type="nucleotide sequence ID" value="NC_015684.1"/>
</dbReference>
<dbReference type="SMR" id="B6JH85"/>
<dbReference type="STRING" id="504832.OCA5_c20490"/>
<dbReference type="KEGG" id="oca:OCAR_5974"/>
<dbReference type="KEGG" id="ocg:OCA5_c20490"/>
<dbReference type="PATRIC" id="fig|504832.7.peg.2169"/>
<dbReference type="eggNOG" id="COG2360">
    <property type="taxonomic scope" value="Bacteria"/>
</dbReference>
<dbReference type="HOGENOM" id="CLU_075045_1_1_5"/>
<dbReference type="OrthoDB" id="9790282at2"/>
<dbReference type="Proteomes" id="UP000007730">
    <property type="component" value="Chromosome"/>
</dbReference>
<dbReference type="GO" id="GO:0005737">
    <property type="term" value="C:cytoplasm"/>
    <property type="evidence" value="ECO:0007669"/>
    <property type="project" value="UniProtKB-SubCell"/>
</dbReference>
<dbReference type="GO" id="GO:0008914">
    <property type="term" value="F:leucyl-tRNA--protein transferase activity"/>
    <property type="evidence" value="ECO:0007669"/>
    <property type="project" value="UniProtKB-UniRule"/>
</dbReference>
<dbReference type="GO" id="GO:0030163">
    <property type="term" value="P:protein catabolic process"/>
    <property type="evidence" value="ECO:0007669"/>
    <property type="project" value="UniProtKB-UniRule"/>
</dbReference>
<dbReference type="FunFam" id="3.40.630.70:FF:000001">
    <property type="entry name" value="Leucyl/phenylalanyl-tRNA--protein transferase"/>
    <property type="match status" value="1"/>
</dbReference>
<dbReference type="Gene3D" id="3.40.630.70">
    <property type="entry name" value="Leucyl/phenylalanyl-tRNA-protein transferase, C-terminal domain"/>
    <property type="match status" value="1"/>
</dbReference>
<dbReference type="HAMAP" id="MF_00688">
    <property type="entry name" value="Leu_Phe_trans"/>
    <property type="match status" value="1"/>
</dbReference>
<dbReference type="InterPro" id="IPR016181">
    <property type="entry name" value="Acyl_CoA_acyltransferase"/>
</dbReference>
<dbReference type="InterPro" id="IPR004616">
    <property type="entry name" value="Leu/Phe-tRNA_Trfase"/>
</dbReference>
<dbReference type="InterPro" id="IPR042203">
    <property type="entry name" value="Leu/Phe-tRNA_Trfase_C"/>
</dbReference>
<dbReference type="NCBIfam" id="TIGR00667">
    <property type="entry name" value="aat"/>
    <property type="match status" value="1"/>
</dbReference>
<dbReference type="PANTHER" id="PTHR30098">
    <property type="entry name" value="LEUCYL/PHENYLALANYL-TRNA--PROTEIN TRANSFERASE"/>
    <property type="match status" value="1"/>
</dbReference>
<dbReference type="PANTHER" id="PTHR30098:SF2">
    <property type="entry name" value="LEUCYL_PHENYLALANYL-TRNA--PROTEIN TRANSFERASE"/>
    <property type="match status" value="1"/>
</dbReference>
<dbReference type="Pfam" id="PF03588">
    <property type="entry name" value="Leu_Phe_trans"/>
    <property type="match status" value="1"/>
</dbReference>
<dbReference type="SUPFAM" id="SSF55729">
    <property type="entry name" value="Acyl-CoA N-acyltransferases (Nat)"/>
    <property type="match status" value="1"/>
</dbReference>
<gene>
    <name evidence="1" type="primary">aat</name>
    <name type="ordered locus">OCAR_5974</name>
    <name type="ordered locus">OCA5_c20490</name>
</gene>
<organism>
    <name type="scientific">Afipia carboxidovorans (strain ATCC 49405 / DSM 1227 / KCTC 32145 / OM5)</name>
    <name type="common">Oligotropha carboxidovorans</name>
    <dbReference type="NCBI Taxonomy" id="504832"/>
    <lineage>
        <taxon>Bacteria</taxon>
        <taxon>Pseudomonadati</taxon>
        <taxon>Pseudomonadota</taxon>
        <taxon>Alphaproteobacteria</taxon>
        <taxon>Hyphomicrobiales</taxon>
        <taxon>Nitrobacteraceae</taxon>
        <taxon>Afipia</taxon>
    </lineage>
</organism>
<sequence>MSSRDSAASEITPEVLLRAYACGIFPMAESADDPGLFWVEPEQRGIFPLEALRISSRLARTVRSDRYRITIDTAFERVLGECAAPAPGREDTWINNRIRKLYSGLFEIGHCHSIEAWDGDDLAGGLYGVSLGGAFFGESMFHRSRDTSKVALVHLAARLIIGGFTLLDTQFVTDHLRSLGATEVPRRKYRALLDRALQLPGDFFALPADRPVSGADVLAIVRGTTAT</sequence>
<comment type="function">
    <text evidence="1">Functions in the N-end rule pathway of protein degradation where it conjugates Leu, Phe and, less efficiently, Met from aminoacyl-tRNAs to the N-termini of proteins containing an N-terminal arginine or lysine.</text>
</comment>
<comment type="catalytic activity">
    <reaction evidence="1">
        <text>N-terminal L-lysyl-[protein] + L-leucyl-tRNA(Leu) = N-terminal L-leucyl-L-lysyl-[protein] + tRNA(Leu) + H(+)</text>
        <dbReference type="Rhea" id="RHEA:12340"/>
        <dbReference type="Rhea" id="RHEA-COMP:9613"/>
        <dbReference type="Rhea" id="RHEA-COMP:9622"/>
        <dbReference type="Rhea" id="RHEA-COMP:12670"/>
        <dbReference type="Rhea" id="RHEA-COMP:12671"/>
        <dbReference type="ChEBI" id="CHEBI:15378"/>
        <dbReference type="ChEBI" id="CHEBI:65249"/>
        <dbReference type="ChEBI" id="CHEBI:78442"/>
        <dbReference type="ChEBI" id="CHEBI:78494"/>
        <dbReference type="ChEBI" id="CHEBI:133043"/>
        <dbReference type="EC" id="2.3.2.6"/>
    </reaction>
</comment>
<comment type="catalytic activity">
    <reaction evidence="1">
        <text>N-terminal L-arginyl-[protein] + L-leucyl-tRNA(Leu) = N-terminal L-leucyl-L-arginyl-[protein] + tRNA(Leu) + H(+)</text>
        <dbReference type="Rhea" id="RHEA:50416"/>
        <dbReference type="Rhea" id="RHEA-COMP:9613"/>
        <dbReference type="Rhea" id="RHEA-COMP:9622"/>
        <dbReference type="Rhea" id="RHEA-COMP:12672"/>
        <dbReference type="Rhea" id="RHEA-COMP:12673"/>
        <dbReference type="ChEBI" id="CHEBI:15378"/>
        <dbReference type="ChEBI" id="CHEBI:64719"/>
        <dbReference type="ChEBI" id="CHEBI:78442"/>
        <dbReference type="ChEBI" id="CHEBI:78494"/>
        <dbReference type="ChEBI" id="CHEBI:133044"/>
        <dbReference type="EC" id="2.3.2.6"/>
    </reaction>
</comment>
<comment type="catalytic activity">
    <reaction evidence="1">
        <text>L-phenylalanyl-tRNA(Phe) + an N-terminal L-alpha-aminoacyl-[protein] = an N-terminal L-phenylalanyl-L-alpha-aminoacyl-[protein] + tRNA(Phe)</text>
        <dbReference type="Rhea" id="RHEA:43632"/>
        <dbReference type="Rhea" id="RHEA-COMP:9668"/>
        <dbReference type="Rhea" id="RHEA-COMP:9699"/>
        <dbReference type="Rhea" id="RHEA-COMP:10636"/>
        <dbReference type="Rhea" id="RHEA-COMP:10637"/>
        <dbReference type="ChEBI" id="CHEBI:78442"/>
        <dbReference type="ChEBI" id="CHEBI:78531"/>
        <dbReference type="ChEBI" id="CHEBI:78597"/>
        <dbReference type="ChEBI" id="CHEBI:83561"/>
        <dbReference type="EC" id="2.3.2.6"/>
    </reaction>
</comment>
<comment type="subcellular location">
    <subcellularLocation>
        <location evidence="1">Cytoplasm</location>
    </subcellularLocation>
</comment>
<comment type="similarity">
    <text evidence="1">Belongs to the L/F-transferase family.</text>
</comment>
<reference key="1">
    <citation type="journal article" date="2008" name="J. Bacteriol.">
        <title>Genome sequence of the chemolithoautotrophic bacterium Oligotropha carboxidovorans OM5T.</title>
        <authorList>
            <person name="Paul D."/>
            <person name="Bridges S."/>
            <person name="Burgess S.C."/>
            <person name="Dandass Y."/>
            <person name="Lawrence M.L."/>
        </authorList>
    </citation>
    <scope>NUCLEOTIDE SEQUENCE [LARGE SCALE GENOMIC DNA]</scope>
    <source>
        <strain>ATCC 49405 / DSM 1227 / KCTC 32145 / OM5</strain>
    </source>
</reference>
<reference key="2">
    <citation type="journal article" date="2011" name="J. Bacteriol.">
        <title>Complete genome sequences of the chemolithoautotrophic Oligotropha carboxidovorans strains OM4 and OM5.</title>
        <authorList>
            <person name="Volland S."/>
            <person name="Rachinger M."/>
            <person name="Strittmatter A."/>
            <person name="Daniel R."/>
            <person name="Gottschalk G."/>
            <person name="Meyer O."/>
        </authorList>
    </citation>
    <scope>NUCLEOTIDE SEQUENCE [LARGE SCALE GENOMIC DNA]</scope>
    <source>
        <strain>ATCC 49405 / DSM 1227 / KCTC 32145 / OM5</strain>
    </source>
</reference>
<protein>
    <recommendedName>
        <fullName evidence="1">Leucyl/phenylalanyl-tRNA--protein transferase</fullName>
        <ecNumber evidence="1">2.3.2.6</ecNumber>
    </recommendedName>
    <alternativeName>
        <fullName evidence="1">L/F-transferase</fullName>
    </alternativeName>
    <alternativeName>
        <fullName evidence="1">Leucyltransferase</fullName>
    </alternativeName>
    <alternativeName>
        <fullName evidence="1">Phenyalanyltransferase</fullName>
    </alternativeName>
</protein>